<dbReference type="EMBL" id="AE004092">
    <property type="protein sequence ID" value="AAK34058.1"/>
    <property type="molecule type" value="Genomic_DNA"/>
</dbReference>
<dbReference type="EMBL" id="CP000017">
    <property type="protein sequence ID" value="AAZ51531.2"/>
    <property type="molecule type" value="Genomic_DNA"/>
</dbReference>
<dbReference type="RefSeq" id="NP_269337.1">
    <property type="nucleotide sequence ID" value="NC_002737.2"/>
</dbReference>
<dbReference type="SMR" id="P67634"/>
<dbReference type="PaxDb" id="1314-HKU360_00957"/>
<dbReference type="KEGG" id="spy:SPy_1196"/>
<dbReference type="KEGG" id="spz:M5005_Spy0913"/>
<dbReference type="PATRIC" id="fig|160490.10.peg.1045"/>
<dbReference type="HOGENOM" id="CLU_027562_9_6_9"/>
<dbReference type="OMA" id="IELKNWG"/>
<dbReference type="Proteomes" id="UP000000750">
    <property type="component" value="Chromosome"/>
</dbReference>
<dbReference type="GO" id="GO:0005737">
    <property type="term" value="C:cytoplasm"/>
    <property type="evidence" value="ECO:0007669"/>
    <property type="project" value="UniProtKB-SubCell"/>
</dbReference>
<dbReference type="GO" id="GO:0003677">
    <property type="term" value="F:DNA binding"/>
    <property type="evidence" value="ECO:0007669"/>
    <property type="project" value="UniProtKB-KW"/>
</dbReference>
<dbReference type="GO" id="GO:0009037">
    <property type="term" value="F:tyrosine-based site-specific recombinase activity"/>
    <property type="evidence" value="ECO:0007669"/>
    <property type="project" value="UniProtKB-UniRule"/>
</dbReference>
<dbReference type="GO" id="GO:0051301">
    <property type="term" value="P:cell division"/>
    <property type="evidence" value="ECO:0007669"/>
    <property type="project" value="UniProtKB-KW"/>
</dbReference>
<dbReference type="GO" id="GO:0007059">
    <property type="term" value="P:chromosome segregation"/>
    <property type="evidence" value="ECO:0007669"/>
    <property type="project" value="UniProtKB-UniRule"/>
</dbReference>
<dbReference type="GO" id="GO:0006310">
    <property type="term" value="P:DNA recombination"/>
    <property type="evidence" value="ECO:0007669"/>
    <property type="project" value="UniProtKB-UniRule"/>
</dbReference>
<dbReference type="CDD" id="cd00397">
    <property type="entry name" value="DNA_BRE_C"/>
    <property type="match status" value="1"/>
</dbReference>
<dbReference type="Gene3D" id="1.10.150.130">
    <property type="match status" value="1"/>
</dbReference>
<dbReference type="Gene3D" id="1.10.443.10">
    <property type="entry name" value="Intergrase catalytic core"/>
    <property type="match status" value="1"/>
</dbReference>
<dbReference type="HAMAP" id="MF_01816">
    <property type="entry name" value="Recomb_XerS"/>
    <property type="match status" value="1"/>
</dbReference>
<dbReference type="InterPro" id="IPR044068">
    <property type="entry name" value="CB"/>
</dbReference>
<dbReference type="InterPro" id="IPR011010">
    <property type="entry name" value="DNA_brk_join_enz"/>
</dbReference>
<dbReference type="InterPro" id="IPR013762">
    <property type="entry name" value="Integrase-like_cat_sf"/>
</dbReference>
<dbReference type="InterPro" id="IPR002104">
    <property type="entry name" value="Integrase_catalytic"/>
</dbReference>
<dbReference type="InterPro" id="IPR010998">
    <property type="entry name" value="Integrase_recombinase_N"/>
</dbReference>
<dbReference type="InterPro" id="IPR004107">
    <property type="entry name" value="Integrase_SAM-like_N"/>
</dbReference>
<dbReference type="InterPro" id="IPR023670">
    <property type="entry name" value="Recomb_XerS"/>
</dbReference>
<dbReference type="InterPro" id="IPR050090">
    <property type="entry name" value="Tyrosine_recombinase_XerCD"/>
</dbReference>
<dbReference type="NCBIfam" id="NF003462">
    <property type="entry name" value="PRK05084.1"/>
    <property type="match status" value="1"/>
</dbReference>
<dbReference type="PANTHER" id="PTHR30349">
    <property type="entry name" value="PHAGE INTEGRASE-RELATED"/>
    <property type="match status" value="1"/>
</dbReference>
<dbReference type="PANTHER" id="PTHR30349:SF77">
    <property type="entry name" value="TYROSINE RECOMBINASE XERC"/>
    <property type="match status" value="1"/>
</dbReference>
<dbReference type="Pfam" id="PF02899">
    <property type="entry name" value="Phage_int_SAM_1"/>
    <property type="match status" value="1"/>
</dbReference>
<dbReference type="Pfam" id="PF00589">
    <property type="entry name" value="Phage_integrase"/>
    <property type="match status" value="1"/>
</dbReference>
<dbReference type="SUPFAM" id="SSF56349">
    <property type="entry name" value="DNA breaking-rejoining enzymes"/>
    <property type="match status" value="1"/>
</dbReference>
<dbReference type="PROSITE" id="PS51900">
    <property type="entry name" value="CB"/>
    <property type="match status" value="1"/>
</dbReference>
<dbReference type="PROSITE" id="PS51898">
    <property type="entry name" value="TYR_RECOMBINASE"/>
    <property type="match status" value="1"/>
</dbReference>
<feature type="chain" id="PRO_0000095365" description="Tyrosine recombinase XerS">
    <location>
        <begin position="1"/>
        <end position="356"/>
    </location>
</feature>
<feature type="domain" description="Core-binding (CB)" evidence="3">
    <location>
        <begin position="16"/>
        <end position="121"/>
    </location>
</feature>
<feature type="domain" description="Tyr recombinase" evidence="2">
    <location>
        <begin position="169"/>
        <end position="354"/>
    </location>
</feature>
<feature type="active site" evidence="1">
    <location>
        <position position="210"/>
    </location>
</feature>
<feature type="active site" evidence="1">
    <location>
        <position position="234"/>
    </location>
</feature>
<feature type="active site" evidence="1">
    <location>
        <position position="306"/>
    </location>
</feature>
<feature type="active site" evidence="1">
    <location>
        <position position="309"/>
    </location>
</feature>
<feature type="active site" evidence="1">
    <location>
        <position position="332"/>
    </location>
</feature>
<feature type="active site" description="O-(3'-phospho-DNA)-tyrosine intermediate" evidence="1">
    <location>
        <position position="341"/>
    </location>
</feature>
<accession>P67634</accession>
<accession>Q48YP1</accession>
<accession>Q99ZK3</accession>
<evidence type="ECO:0000255" key="1">
    <source>
        <dbReference type="HAMAP-Rule" id="MF_01816"/>
    </source>
</evidence>
<evidence type="ECO:0000255" key="2">
    <source>
        <dbReference type="PROSITE-ProRule" id="PRU01246"/>
    </source>
</evidence>
<evidence type="ECO:0000255" key="3">
    <source>
        <dbReference type="PROSITE-ProRule" id="PRU01248"/>
    </source>
</evidence>
<protein>
    <recommendedName>
        <fullName evidence="1">Tyrosine recombinase XerS</fullName>
    </recommendedName>
</protein>
<reference key="1">
    <citation type="journal article" date="2001" name="Proc. Natl. Acad. Sci. U.S.A.">
        <title>Complete genome sequence of an M1 strain of Streptococcus pyogenes.</title>
        <authorList>
            <person name="Ferretti J.J."/>
            <person name="McShan W.M."/>
            <person name="Ajdic D.J."/>
            <person name="Savic D.J."/>
            <person name="Savic G."/>
            <person name="Lyon K."/>
            <person name="Primeaux C."/>
            <person name="Sezate S."/>
            <person name="Suvorov A.N."/>
            <person name="Kenton S."/>
            <person name="Lai H.S."/>
            <person name="Lin S.P."/>
            <person name="Qian Y."/>
            <person name="Jia H.G."/>
            <person name="Najar F.Z."/>
            <person name="Ren Q."/>
            <person name="Zhu H."/>
            <person name="Song L."/>
            <person name="White J."/>
            <person name="Yuan X."/>
            <person name="Clifton S.W."/>
            <person name="Roe B.A."/>
            <person name="McLaughlin R.E."/>
        </authorList>
    </citation>
    <scope>NUCLEOTIDE SEQUENCE [LARGE SCALE GENOMIC DNA]</scope>
    <source>
        <strain>ATCC 700294 / SF370 / Serotype M1</strain>
    </source>
</reference>
<reference key="2">
    <citation type="journal article" date="2005" name="J. Infect. Dis.">
        <title>Evolutionary origin and emergence of a highly successful clone of serotype M1 group A Streptococcus involved multiple horizontal gene transfer events.</title>
        <authorList>
            <person name="Sumby P."/>
            <person name="Porcella S.F."/>
            <person name="Madrigal A.G."/>
            <person name="Barbian K.D."/>
            <person name="Virtaneva K."/>
            <person name="Ricklefs S.M."/>
            <person name="Sturdevant D.E."/>
            <person name="Graham M.R."/>
            <person name="Vuopio-Varkila J."/>
            <person name="Hoe N.P."/>
            <person name="Musser J.M."/>
        </authorList>
    </citation>
    <scope>NUCLEOTIDE SEQUENCE [LARGE SCALE GENOMIC DNA]</scope>
    <source>
        <strain>ATCC BAA-947 / MGAS5005 / Serotype M1</strain>
    </source>
</reference>
<reference key="3">
    <citation type="submission" date="2014-04" db="EMBL/GenBank/DDBJ databases">
        <authorList>
            <person name="Beres S.B."/>
            <person name="Musser J.M."/>
        </authorList>
    </citation>
    <scope>SEQUENCE REVISION</scope>
</reference>
<gene>
    <name evidence="1" type="primary">xerS</name>
    <name type="ordered locus">SPy_1196</name>
    <name type="ordered locus">M5005_Spy0913</name>
</gene>
<comment type="function">
    <text evidence="1">Site-specific tyrosine recombinase, which acts by catalyzing the cutting and rejoining of the recombining DNA molecules. Essential to convert dimers of the bacterial chromosome into monomers to permit their segregation at cell division.</text>
</comment>
<comment type="activity regulation">
    <text evidence="1">FtsK is required for recombination.</text>
</comment>
<comment type="subcellular location">
    <subcellularLocation>
        <location evidence="1">Cytoplasm</location>
    </subcellularLocation>
</comment>
<comment type="similarity">
    <text evidence="1">Belongs to the 'phage' integrase family. XerS subfamily.</text>
</comment>
<organism>
    <name type="scientific">Streptococcus pyogenes serotype M1</name>
    <dbReference type="NCBI Taxonomy" id="301447"/>
    <lineage>
        <taxon>Bacteria</taxon>
        <taxon>Bacillati</taxon>
        <taxon>Bacillota</taxon>
        <taxon>Bacilli</taxon>
        <taxon>Lactobacillales</taxon>
        <taxon>Streptococcaceae</taxon>
        <taxon>Streptococcus</taxon>
    </lineage>
</organism>
<name>XERS_STRP1</name>
<sequence length="356" mass="41472">MRRELLLEKIETYKAIMPWYVLDYYQSKLAVPYSFTTLYEYLKEYKRFFDWLMDADLTQAPKIADIDLSTLEHLTKKDLEAFVLYLRERPSLNTYSTKEGLSQTTINRTLSALSSLYKYLTEEVENDQGEPYFYRNVMKKVSTKKKKETLASRAENIKQKLFLGDETLAFLDYVDKEYEQKLSNRAKSSFRKNKERDLAIIALLLASGVRLSEAVNLDLKDVNLNMMIIEVIRKGGKRDSVNVAGFAKGYLESYLAVRQRRYKAEKQDLAFFLTEYRGVPNRMDASSIEKMVGKYSEDFKIRVTPHKLRHTLATRLYDATKSQVLVSHQLGHSSTQVTDLYTHIVNDEQKNALDNL</sequence>
<keyword id="KW-0131">Cell cycle</keyword>
<keyword id="KW-0132">Cell division</keyword>
<keyword id="KW-0159">Chromosome partition</keyword>
<keyword id="KW-0963">Cytoplasm</keyword>
<keyword id="KW-0229">DNA integration</keyword>
<keyword id="KW-0233">DNA recombination</keyword>
<keyword id="KW-0238">DNA-binding</keyword>
<keyword id="KW-1185">Reference proteome</keyword>
<proteinExistence type="inferred from homology"/>